<reference key="1">
    <citation type="journal article" date="2010" name="J. Bacteriol.">
        <title>Complete genome sequence of Beijerinckia indica subsp. indica.</title>
        <authorList>
            <person name="Tamas I."/>
            <person name="Dedysh S.N."/>
            <person name="Liesack W."/>
            <person name="Stott M.B."/>
            <person name="Alam M."/>
            <person name="Murrell J.C."/>
            <person name="Dunfield P.F."/>
        </authorList>
    </citation>
    <scope>NUCLEOTIDE SEQUENCE [LARGE SCALE GENOMIC DNA]</scope>
    <source>
        <strain>ATCC 9039 / DSM 1715 / NCIMB 8712</strain>
    </source>
</reference>
<dbReference type="EMBL" id="CP001016">
    <property type="protein sequence ID" value="ACB95841.1"/>
    <property type="status" value="ALT_INIT"/>
    <property type="molecule type" value="Genomic_DNA"/>
</dbReference>
<dbReference type="RefSeq" id="WP_041778729.1">
    <property type="nucleotide sequence ID" value="NC_010581.1"/>
</dbReference>
<dbReference type="SMR" id="B2IGT0"/>
<dbReference type="STRING" id="395963.Bind_2223"/>
<dbReference type="KEGG" id="bid:Bind_2223"/>
<dbReference type="eggNOG" id="COG0052">
    <property type="taxonomic scope" value="Bacteria"/>
</dbReference>
<dbReference type="HOGENOM" id="CLU_040318_2_1_5"/>
<dbReference type="OrthoDB" id="9808036at2"/>
<dbReference type="Proteomes" id="UP000001695">
    <property type="component" value="Chromosome"/>
</dbReference>
<dbReference type="GO" id="GO:0022627">
    <property type="term" value="C:cytosolic small ribosomal subunit"/>
    <property type="evidence" value="ECO:0007669"/>
    <property type="project" value="TreeGrafter"/>
</dbReference>
<dbReference type="GO" id="GO:0003735">
    <property type="term" value="F:structural constituent of ribosome"/>
    <property type="evidence" value="ECO:0007669"/>
    <property type="project" value="InterPro"/>
</dbReference>
<dbReference type="GO" id="GO:0006412">
    <property type="term" value="P:translation"/>
    <property type="evidence" value="ECO:0007669"/>
    <property type="project" value="UniProtKB-UniRule"/>
</dbReference>
<dbReference type="CDD" id="cd01425">
    <property type="entry name" value="RPS2"/>
    <property type="match status" value="1"/>
</dbReference>
<dbReference type="FunFam" id="1.10.287.610:FF:000001">
    <property type="entry name" value="30S ribosomal protein S2"/>
    <property type="match status" value="1"/>
</dbReference>
<dbReference type="Gene3D" id="1.10.150.20">
    <property type="entry name" value="5' to 3' exonuclease, C-terminal subdomain"/>
    <property type="match status" value="1"/>
</dbReference>
<dbReference type="Gene3D" id="3.40.50.10490">
    <property type="entry name" value="Glucose-6-phosphate isomerase like protein, domain 1"/>
    <property type="match status" value="1"/>
</dbReference>
<dbReference type="Gene3D" id="1.10.287.610">
    <property type="entry name" value="Helix hairpin bin"/>
    <property type="match status" value="1"/>
</dbReference>
<dbReference type="HAMAP" id="MF_00291_B">
    <property type="entry name" value="Ribosomal_uS2_B"/>
    <property type="match status" value="1"/>
</dbReference>
<dbReference type="InterPro" id="IPR001865">
    <property type="entry name" value="Ribosomal_uS2"/>
</dbReference>
<dbReference type="InterPro" id="IPR005706">
    <property type="entry name" value="Ribosomal_uS2_bac/mit/plastid"/>
</dbReference>
<dbReference type="InterPro" id="IPR018130">
    <property type="entry name" value="Ribosomal_uS2_CS"/>
</dbReference>
<dbReference type="InterPro" id="IPR023591">
    <property type="entry name" value="Ribosomal_uS2_flav_dom_sf"/>
</dbReference>
<dbReference type="NCBIfam" id="NF008966">
    <property type="entry name" value="PRK12311.1"/>
    <property type="match status" value="1"/>
</dbReference>
<dbReference type="NCBIfam" id="TIGR01011">
    <property type="entry name" value="rpsB_bact"/>
    <property type="match status" value="1"/>
</dbReference>
<dbReference type="PANTHER" id="PTHR12534">
    <property type="entry name" value="30S RIBOSOMAL PROTEIN S2 PROKARYOTIC AND ORGANELLAR"/>
    <property type="match status" value="1"/>
</dbReference>
<dbReference type="PANTHER" id="PTHR12534:SF0">
    <property type="entry name" value="SMALL RIBOSOMAL SUBUNIT PROTEIN US2M"/>
    <property type="match status" value="1"/>
</dbReference>
<dbReference type="Pfam" id="PF00318">
    <property type="entry name" value="Ribosomal_S2"/>
    <property type="match status" value="1"/>
</dbReference>
<dbReference type="PRINTS" id="PR00395">
    <property type="entry name" value="RIBOSOMALS2"/>
</dbReference>
<dbReference type="SUPFAM" id="SSF52313">
    <property type="entry name" value="Ribosomal protein S2"/>
    <property type="match status" value="1"/>
</dbReference>
<dbReference type="PROSITE" id="PS00963">
    <property type="entry name" value="RIBOSOMAL_S2_2"/>
    <property type="match status" value="1"/>
</dbReference>
<accession>B2IGT0</accession>
<organism>
    <name type="scientific">Beijerinckia indica subsp. indica (strain ATCC 9039 / DSM 1715 / NCIMB 8712)</name>
    <dbReference type="NCBI Taxonomy" id="395963"/>
    <lineage>
        <taxon>Bacteria</taxon>
        <taxon>Pseudomonadati</taxon>
        <taxon>Pseudomonadota</taxon>
        <taxon>Alphaproteobacteria</taxon>
        <taxon>Hyphomicrobiales</taxon>
        <taxon>Beijerinckiaceae</taxon>
        <taxon>Beijerinckia</taxon>
    </lineage>
</organism>
<evidence type="ECO:0000255" key="1">
    <source>
        <dbReference type="HAMAP-Rule" id="MF_00291"/>
    </source>
</evidence>
<evidence type="ECO:0000305" key="2"/>
<gene>
    <name evidence="1" type="primary">rpsB</name>
    <name type="ordered locus">Bind_2223</name>
</gene>
<keyword id="KW-1185">Reference proteome</keyword>
<keyword id="KW-0687">Ribonucleoprotein</keyword>
<keyword id="KW-0689">Ribosomal protein</keyword>
<proteinExistence type="inferred from homology"/>
<comment type="similarity">
    <text evidence="1">Belongs to the universal ribosomal protein uS2 family.</text>
</comment>
<comment type="sequence caution" evidence="2">
    <conflict type="erroneous initiation">
        <sequence resource="EMBL-CDS" id="ACB95841"/>
    </conflict>
</comment>
<sequence length="336" mass="36608">MSLPEFSMRGLLESGAHFGHQAHRWNPKMAPYIFGARNNIHIIDLAQTVPLLHQALKAISDTVARGGRVLFVGTKRQAQEAIADAAQRSAQYYVNSRWLGGMLTNWKTISASIQRLRKLDEILASGAGGLTKKERLMMSRERDKLEKALGGIKDMGGVPDLIFVIDTNKEQLAIQEAERLHIPVAAILDTNCDPDGITYPIPGNDDAGRAISLYCDLIARAALDGISRSQGMGGFDAGELEAPVEDLPPVEGEYEAAPTEIFELLDAPRGAPDDLAKLPGSGPQIVKKLNDAGIFHYWQVAAMTPEDVAKLDHDLKLSGRIERDGWVNQARSLIAS</sequence>
<protein>
    <recommendedName>
        <fullName evidence="1">Small ribosomal subunit protein uS2</fullName>
    </recommendedName>
    <alternativeName>
        <fullName evidence="2">30S ribosomal protein S2</fullName>
    </alternativeName>
</protein>
<name>RS2_BEII9</name>
<feature type="chain" id="PRO_5000343703" description="Small ribosomal subunit protein uS2">
    <location>
        <begin position="1"/>
        <end position="336"/>
    </location>
</feature>